<proteinExistence type="inferred from homology"/>
<protein>
    <recommendedName>
        <fullName evidence="3">3-hydroxy-3-methylglutaryl-coenzyme A reductase</fullName>
        <shortName evidence="3">HMG-CoA reductase</shortName>
        <ecNumber evidence="3">1.1.1.34</ecNumber>
    </recommendedName>
</protein>
<evidence type="ECO:0000250" key="1">
    <source>
        <dbReference type="UniProtKB" id="P04035"/>
    </source>
</evidence>
<evidence type="ECO:0000250" key="2">
    <source>
        <dbReference type="UniProtKB" id="P12684"/>
    </source>
</evidence>
<evidence type="ECO:0000250" key="3">
    <source>
        <dbReference type="UniProtKB" id="Q4WHZ1"/>
    </source>
</evidence>
<evidence type="ECO:0000255" key="4"/>
<evidence type="ECO:0000255" key="5">
    <source>
        <dbReference type="PROSITE-ProRule" id="PRU00199"/>
    </source>
</evidence>
<evidence type="ECO:0000255" key="6">
    <source>
        <dbReference type="PROSITE-ProRule" id="PRU10003"/>
    </source>
</evidence>
<evidence type="ECO:0000305" key="7"/>
<gene>
    <name type="ORF">ATEG_09965</name>
</gene>
<dbReference type="EC" id="1.1.1.34" evidence="3"/>
<dbReference type="EMBL" id="CH476609">
    <property type="protein sequence ID" value="EAU29414.1"/>
    <property type="molecule type" value="Genomic_DNA"/>
</dbReference>
<dbReference type="RefSeq" id="XP_001209267.1">
    <property type="nucleotide sequence ID" value="XM_001209267.1"/>
</dbReference>
<dbReference type="SMR" id="Q0C8L9"/>
<dbReference type="STRING" id="341663.Q0C8L9"/>
<dbReference type="EnsemblFungi" id="EAU29414">
    <property type="protein sequence ID" value="EAU29414"/>
    <property type="gene ID" value="ATEG_09965"/>
</dbReference>
<dbReference type="GeneID" id="4319611"/>
<dbReference type="VEuPathDB" id="FungiDB:ATEG_09965"/>
<dbReference type="eggNOG" id="KOG2480">
    <property type="taxonomic scope" value="Eukaryota"/>
</dbReference>
<dbReference type="HOGENOM" id="CLU_001734_0_0_1"/>
<dbReference type="OMA" id="ILCVKLE"/>
<dbReference type="OrthoDB" id="310654at2759"/>
<dbReference type="UniPathway" id="UPA00058">
    <property type="reaction ID" value="UER00103"/>
</dbReference>
<dbReference type="Proteomes" id="UP000007963">
    <property type="component" value="Unassembled WGS sequence"/>
</dbReference>
<dbReference type="GO" id="GO:0005789">
    <property type="term" value="C:endoplasmic reticulum membrane"/>
    <property type="evidence" value="ECO:0007669"/>
    <property type="project" value="UniProtKB-SubCell"/>
</dbReference>
<dbReference type="GO" id="GO:0005778">
    <property type="term" value="C:peroxisomal membrane"/>
    <property type="evidence" value="ECO:0007669"/>
    <property type="project" value="TreeGrafter"/>
</dbReference>
<dbReference type="GO" id="GO:0004420">
    <property type="term" value="F:hydroxymethylglutaryl-CoA reductase (NADPH) activity"/>
    <property type="evidence" value="ECO:0007669"/>
    <property type="project" value="UniProtKB-EC"/>
</dbReference>
<dbReference type="GO" id="GO:0015936">
    <property type="term" value="P:coenzyme A metabolic process"/>
    <property type="evidence" value="ECO:0007669"/>
    <property type="project" value="InterPro"/>
</dbReference>
<dbReference type="GO" id="GO:0006696">
    <property type="term" value="P:ergosterol biosynthetic process"/>
    <property type="evidence" value="ECO:0007669"/>
    <property type="project" value="TreeGrafter"/>
</dbReference>
<dbReference type="GO" id="GO:0008299">
    <property type="term" value="P:isoprenoid biosynthetic process"/>
    <property type="evidence" value="ECO:0007669"/>
    <property type="project" value="InterPro"/>
</dbReference>
<dbReference type="CDD" id="cd00643">
    <property type="entry name" value="HMG-CoA_reductase_classI"/>
    <property type="match status" value="1"/>
</dbReference>
<dbReference type="FunFam" id="1.10.3270.10:FF:000001">
    <property type="entry name" value="3-hydroxy-3-methylglutaryl coenzyme A reductase"/>
    <property type="match status" value="1"/>
</dbReference>
<dbReference type="FunFam" id="3.30.70.420:FF:000001">
    <property type="entry name" value="3-hydroxy-3-methylglutaryl coenzyme A reductase"/>
    <property type="match status" value="1"/>
</dbReference>
<dbReference type="FunFam" id="3.90.770.10:FF:000001">
    <property type="entry name" value="3-hydroxy-3-methylglutaryl coenzyme A reductase"/>
    <property type="match status" value="1"/>
</dbReference>
<dbReference type="Gene3D" id="3.90.770.10">
    <property type="entry name" value="3-hydroxy-3-methylglutaryl-coenzyme A Reductase, Chain A, domain 2"/>
    <property type="match status" value="1"/>
</dbReference>
<dbReference type="Gene3D" id="1.10.3270.10">
    <property type="entry name" value="HMGR, N-terminal domain"/>
    <property type="match status" value="1"/>
</dbReference>
<dbReference type="Gene3D" id="3.30.70.420">
    <property type="entry name" value="Hydroxymethylglutaryl-CoA reductase, class I/II, NAD/NADP-binding domain"/>
    <property type="match status" value="1"/>
</dbReference>
<dbReference type="InterPro" id="IPR025583">
    <property type="entry name" value="HMG-CoA_N_dom"/>
</dbReference>
<dbReference type="InterPro" id="IPR002202">
    <property type="entry name" value="HMG_CoA_Rdtase"/>
</dbReference>
<dbReference type="InterPro" id="IPR023074">
    <property type="entry name" value="HMG_CoA_Rdtase_cat_sf"/>
</dbReference>
<dbReference type="InterPro" id="IPR023076">
    <property type="entry name" value="HMG_CoA_Rdtase_CS"/>
</dbReference>
<dbReference type="InterPro" id="IPR004554">
    <property type="entry name" value="HMG_CoA_Rdtase_eu_arc"/>
</dbReference>
<dbReference type="InterPro" id="IPR023282">
    <property type="entry name" value="HMG_CoA_Rdtase_N"/>
</dbReference>
<dbReference type="InterPro" id="IPR009023">
    <property type="entry name" value="HMG_CoA_Rdtase_NAD(P)-bd_sf"/>
</dbReference>
<dbReference type="InterPro" id="IPR009029">
    <property type="entry name" value="HMG_CoA_Rdtase_sub-bd_dom_sf"/>
</dbReference>
<dbReference type="InterPro" id="IPR053958">
    <property type="entry name" value="HMGCR/SNAP/NPC1-like_SSD"/>
</dbReference>
<dbReference type="InterPro" id="IPR000731">
    <property type="entry name" value="SSD"/>
</dbReference>
<dbReference type="NCBIfam" id="TIGR00533">
    <property type="entry name" value="HMG_CoA_R_NADP"/>
    <property type="match status" value="1"/>
</dbReference>
<dbReference type="PANTHER" id="PTHR10572">
    <property type="entry name" value="3-HYDROXY-3-METHYLGLUTARYL-COENZYME A REDUCTASE"/>
    <property type="match status" value="1"/>
</dbReference>
<dbReference type="PANTHER" id="PTHR10572:SF24">
    <property type="entry name" value="3-HYDROXY-3-METHYLGLUTARYL-COENZYME A REDUCTASE"/>
    <property type="match status" value="1"/>
</dbReference>
<dbReference type="Pfam" id="PF00368">
    <property type="entry name" value="HMG-CoA_red"/>
    <property type="match status" value="1"/>
</dbReference>
<dbReference type="Pfam" id="PF13323">
    <property type="entry name" value="HPIH"/>
    <property type="match status" value="1"/>
</dbReference>
<dbReference type="Pfam" id="PF12349">
    <property type="entry name" value="Sterol-sensing"/>
    <property type="match status" value="1"/>
</dbReference>
<dbReference type="PRINTS" id="PR00071">
    <property type="entry name" value="HMGCOARDTASE"/>
</dbReference>
<dbReference type="SUPFAM" id="SSF55035">
    <property type="entry name" value="NAD-binding domain of HMG-CoA reductase"/>
    <property type="match status" value="1"/>
</dbReference>
<dbReference type="SUPFAM" id="SSF56542">
    <property type="entry name" value="Substrate-binding domain of HMG-CoA reductase"/>
    <property type="match status" value="1"/>
</dbReference>
<dbReference type="PROSITE" id="PS00066">
    <property type="entry name" value="HMG_COA_REDUCTASE_1"/>
    <property type="match status" value="1"/>
</dbReference>
<dbReference type="PROSITE" id="PS00318">
    <property type="entry name" value="HMG_COA_REDUCTASE_2"/>
    <property type="match status" value="1"/>
</dbReference>
<dbReference type="PROSITE" id="PS01192">
    <property type="entry name" value="HMG_COA_REDUCTASE_3"/>
    <property type="match status" value="1"/>
</dbReference>
<dbReference type="PROSITE" id="PS50065">
    <property type="entry name" value="HMG_COA_REDUCTASE_4"/>
    <property type="match status" value="1"/>
</dbReference>
<dbReference type="PROSITE" id="PS50156">
    <property type="entry name" value="SSD"/>
    <property type="match status" value="1"/>
</dbReference>
<sequence length="1048" mass="112181">MDPVVKKPSPGGVQHRVTKGLRAIVGHACRHPIHTLLVTALTAATTHLHVLEGTYQAAHRGLAPWAKETPLNVQSFLCGSRTVTLGEASAWRWQIDDRPKVSEDGQSDFHWALVTLDLPGASVDASIPFLSNTLSEFLGAEQITPTPDSSPSPDHSALTFRVPYSQLDGFLQAVEIIPSEKEDDSWRLRSPREEGSPTSLGHWVGSSWLSFLHRVKHAETVDLVIIGLSYLAMNMTVVSLFRVMRQLGSRFWLATSVLLSGAFAFVLGLGITTTCDVPVDMLLLFEGIPYLVLTVGFEKPIQLTRAVLCVSEELRGGWQRPVPNGASSDDSRQSQLIPNIIQLAVDREGWYIVRSYLLEIGALALGAVLRPNDSLGHFCFLAAWTLLIDAILLFTFYATILCVKLEITRIRSPGGLGQVNAKHPSGIFGHKVKSTNITWWKLLTVGGFVLCHFLQLSPFFYRVMGEYMANGTLPPTAVSPFKEAANGLNEIYLTARVEGFETRVTVLPPLQYALESAGFNISATKRSTFDGVLDGLESPLGRLCLMGALVVSLVLNNHLIHAARWHAWPQARESAVPDGSSLSVPCSATAPEVCTRPPEETEALLKSNQAESLTDDELVELCLRGKIAGYSLEKTLERIAAGSSCSVTRLDAFTRAVRIRRAAVSKTPSTQNLCSGLAESLLPYRDYNYELVHGACCENVVGYLPLPLGVAGPMVIDGQALFIPMATTEGVLVASASRGCKAINAGGGATTMLKGDGMTRGPCLRFPSAQRAAEAQRWVESPLGHEVLAAAFNATSRFARLQTLTVAQAGIYLYIRFRTTTGDAMGMNMISKGVEKALEAMAAEGGFPDMHTVTLSGNFCSDKKSAAINWIGGRGKSVIAEATIPAETVRQVLKTDVDALVELNTAKNLVGSAMAGSLGGFNAHASNLVQAVFLATGQDPAQNVESSSCITTMKNIDGNLHIAVSMPSMEVGTIGGGTILEAQGAMLDLLGVRGAHATEPGANARRLARIVAAAVLAGELSTCAALAAGHLVNAHMQHNRSAGATVKK</sequence>
<accession>Q0C8L9</accession>
<name>HMDH_ASPTN</name>
<organism>
    <name type="scientific">Aspergillus terreus (strain NIH 2624 / FGSC A1156)</name>
    <dbReference type="NCBI Taxonomy" id="341663"/>
    <lineage>
        <taxon>Eukaryota</taxon>
        <taxon>Fungi</taxon>
        <taxon>Dikarya</taxon>
        <taxon>Ascomycota</taxon>
        <taxon>Pezizomycotina</taxon>
        <taxon>Eurotiomycetes</taxon>
        <taxon>Eurotiomycetidae</taxon>
        <taxon>Eurotiales</taxon>
        <taxon>Aspergillaceae</taxon>
        <taxon>Aspergillus</taxon>
        <taxon>Aspergillus subgen. Circumdati</taxon>
    </lineage>
</organism>
<keyword id="KW-0256">Endoplasmic reticulum</keyword>
<keyword id="KW-0325">Glycoprotein</keyword>
<keyword id="KW-0444">Lipid biosynthesis</keyword>
<keyword id="KW-0443">Lipid metabolism</keyword>
<keyword id="KW-0472">Membrane</keyword>
<keyword id="KW-0521">NADP</keyword>
<keyword id="KW-0560">Oxidoreductase</keyword>
<keyword id="KW-1185">Reference proteome</keyword>
<keyword id="KW-0752">Steroid biosynthesis</keyword>
<keyword id="KW-0753">Steroid metabolism</keyword>
<keyword id="KW-0756">Sterol biosynthesis</keyword>
<keyword id="KW-1207">Sterol metabolism</keyword>
<keyword id="KW-0812">Transmembrane</keyword>
<keyword id="KW-1133">Transmembrane helix</keyword>
<feature type="chain" id="PRO_0000283711" description="3-hydroxy-3-methylglutaryl-coenzyme A reductase">
    <location>
        <begin position="1"/>
        <end position="1048"/>
    </location>
</feature>
<feature type="topological domain" description="Cytoplasmic" evidence="2">
    <location>
        <begin position="1"/>
        <end position="32"/>
    </location>
</feature>
<feature type="transmembrane region" description="Helical" evidence="4">
    <location>
        <begin position="33"/>
        <end position="53"/>
    </location>
</feature>
<feature type="topological domain" description="Lumenal" evidence="2">
    <location>
        <begin position="54"/>
        <end position="220"/>
    </location>
</feature>
<feature type="transmembrane region" description="Helical" evidence="4">
    <location>
        <begin position="221"/>
        <end position="241"/>
    </location>
</feature>
<feature type="topological domain" description="Cytoplasmic" evidence="2">
    <location>
        <begin position="242"/>
        <end position="250"/>
    </location>
</feature>
<feature type="transmembrane region" description="Helical" evidence="4">
    <location>
        <begin position="251"/>
        <end position="271"/>
    </location>
</feature>
<feature type="topological domain" description="Lumenal" evidence="2">
    <location>
        <begin position="272"/>
        <end position="276"/>
    </location>
</feature>
<feature type="transmembrane region" description="Helical" evidence="4">
    <location>
        <begin position="277"/>
        <end position="297"/>
    </location>
</feature>
<feature type="topological domain" description="Cytoplasmic" evidence="2">
    <location>
        <begin position="298"/>
        <end position="348"/>
    </location>
</feature>
<feature type="transmembrane region" description="Helical" evidence="4">
    <location>
        <begin position="349"/>
        <end position="369"/>
    </location>
</feature>
<feature type="topological domain" description="Lumenal" evidence="2">
    <location>
        <begin position="370"/>
        <end position="377"/>
    </location>
</feature>
<feature type="transmembrane region" description="Helical" evidence="4">
    <location>
        <begin position="378"/>
        <end position="398"/>
    </location>
</feature>
<feature type="topological domain" description="Cytoplasmic" evidence="2">
    <location>
        <begin position="399"/>
        <end position="439"/>
    </location>
</feature>
<feature type="transmembrane region" description="Helical" evidence="4">
    <location>
        <begin position="440"/>
        <end position="460"/>
    </location>
</feature>
<feature type="topological domain" description="Lumenal" evidence="2">
    <location>
        <begin position="461"/>
        <end position="542"/>
    </location>
</feature>
<feature type="transmembrane region" description="Helical" evidence="4">
    <location>
        <begin position="543"/>
        <end position="563"/>
    </location>
</feature>
<feature type="topological domain" description="Cytoplasmic" evidence="2">
    <location>
        <begin position="564"/>
        <end position="1048"/>
    </location>
</feature>
<feature type="domain" description="SSD" evidence="5">
    <location>
        <begin position="222"/>
        <end position="403"/>
    </location>
</feature>
<feature type="active site" description="Charge relay system" evidence="1">
    <location>
        <position position="729"/>
    </location>
</feature>
<feature type="active site" description="Charge relay system" evidence="1">
    <location>
        <position position="863"/>
    </location>
</feature>
<feature type="active site" description="Charge relay system" evidence="1">
    <location>
        <position position="939"/>
    </location>
</feature>
<feature type="active site" description="Proton donor" evidence="6">
    <location>
        <position position="1035"/>
    </location>
</feature>
<feature type="binding site" evidence="1">
    <location>
        <begin position="735"/>
        <end position="741"/>
    </location>
    <ligand>
        <name>CoA</name>
        <dbReference type="ChEBI" id="CHEBI:57287"/>
    </ligand>
</feature>
<feature type="binding site" evidence="1">
    <location>
        <begin position="796"/>
        <end position="798"/>
    </location>
    <ligand>
        <name>NADP(+)</name>
        <dbReference type="ChEBI" id="CHEBI:58349"/>
    </ligand>
</feature>
<feature type="binding site" evidence="1">
    <location>
        <begin position="823"/>
        <end position="831"/>
    </location>
    <ligand>
        <name>NADP(+)</name>
        <dbReference type="ChEBI" id="CHEBI:58349"/>
    </ligand>
</feature>
<feature type="binding site" evidence="1">
    <location>
        <begin position="892"/>
        <end position="894"/>
    </location>
    <ligand>
        <name>CoA</name>
        <dbReference type="ChEBI" id="CHEBI:57287"/>
    </ligand>
</feature>
<feature type="binding site" evidence="1">
    <location>
        <begin position="1034"/>
        <end position="1035"/>
    </location>
    <ligand>
        <name>CoA</name>
        <dbReference type="ChEBI" id="CHEBI:57287"/>
    </ligand>
</feature>
<feature type="binding site" evidence="1">
    <location>
        <begin position="1039"/>
        <end position="1040"/>
    </location>
    <ligand>
        <name>NADP(+)</name>
        <dbReference type="ChEBI" id="CHEBI:58349"/>
    </ligand>
</feature>
<feature type="glycosylation site" description="N-linked (GlcNAc...) asparagine" evidence="4">
    <location>
        <position position="372"/>
    </location>
</feature>
<feature type="glycosylation site" description="N-linked (GlcNAc...) asparagine" evidence="4">
    <location>
        <position position="470"/>
    </location>
</feature>
<feature type="glycosylation site" description="N-linked (GlcNAc...) asparagine" evidence="4">
    <location>
        <position position="520"/>
    </location>
</feature>
<comment type="function">
    <text evidence="3">HMG-CoA reductase; part of the first module of ergosterol biosynthesis pathway that includes the early steps of the pathway, conserved across all eukaryotes, and which results in the formation of mevalonate from acetyl-coenzyme A (acetyl-CoA) (By similarity). In this module, the cytosolic acetyl-CoA acetyltransferase catalyzes the formation of acetoacetyl-CoA (By similarity). The hydroxymethylglutaryl-CoA synthase then condenses acetyl-CoA with acetoacetyl-CoA to form HMG-CoA (By similarity). The rate-limiting step of the early module is the reduction to mevalonate by the 3-hydroxy-3-methylglutaryl-coenzyme A (HMG-CoA) reductase (By similarity).</text>
</comment>
<comment type="catalytic activity">
    <reaction evidence="6">
        <text>(R)-mevalonate + 2 NADP(+) + CoA = (3S)-3-hydroxy-3-methylglutaryl-CoA + 2 NADPH + 2 H(+)</text>
        <dbReference type="Rhea" id="RHEA:15989"/>
        <dbReference type="ChEBI" id="CHEBI:15378"/>
        <dbReference type="ChEBI" id="CHEBI:36464"/>
        <dbReference type="ChEBI" id="CHEBI:43074"/>
        <dbReference type="ChEBI" id="CHEBI:57287"/>
        <dbReference type="ChEBI" id="CHEBI:57783"/>
        <dbReference type="ChEBI" id="CHEBI:58349"/>
        <dbReference type="EC" id="1.1.1.34"/>
    </reaction>
</comment>
<comment type="pathway">
    <text evidence="3">Metabolic intermediate biosynthesis; (R)-mevalonate biosynthesis; (R)-mevalonate from acetyl-CoA: step 3/3.</text>
</comment>
<comment type="subcellular location">
    <subcellularLocation>
        <location evidence="7">Endoplasmic reticulum membrane</location>
        <topology evidence="4">Multi-pass membrane protein</topology>
    </subcellularLocation>
</comment>
<comment type="similarity">
    <text evidence="7">Belongs to the HMG-CoA reductase family.</text>
</comment>
<reference key="1">
    <citation type="submission" date="2005-09" db="EMBL/GenBank/DDBJ databases">
        <title>Annotation of the Aspergillus terreus NIH2624 genome.</title>
        <authorList>
            <person name="Birren B.W."/>
            <person name="Lander E.S."/>
            <person name="Galagan J.E."/>
            <person name="Nusbaum C."/>
            <person name="Devon K."/>
            <person name="Henn M."/>
            <person name="Ma L.-J."/>
            <person name="Jaffe D.B."/>
            <person name="Butler J."/>
            <person name="Alvarez P."/>
            <person name="Gnerre S."/>
            <person name="Grabherr M."/>
            <person name="Kleber M."/>
            <person name="Mauceli E.W."/>
            <person name="Brockman W."/>
            <person name="Rounsley S."/>
            <person name="Young S.K."/>
            <person name="LaButti K."/>
            <person name="Pushparaj V."/>
            <person name="DeCaprio D."/>
            <person name="Crawford M."/>
            <person name="Koehrsen M."/>
            <person name="Engels R."/>
            <person name="Montgomery P."/>
            <person name="Pearson M."/>
            <person name="Howarth C."/>
            <person name="Larson L."/>
            <person name="Luoma S."/>
            <person name="White J."/>
            <person name="Alvarado L."/>
            <person name="Kodira C.D."/>
            <person name="Zeng Q."/>
            <person name="Oleary S."/>
            <person name="Yandava C."/>
            <person name="Denning D.W."/>
            <person name="Nierman W.C."/>
            <person name="Milne T."/>
            <person name="Madden K."/>
        </authorList>
    </citation>
    <scope>NUCLEOTIDE SEQUENCE [LARGE SCALE GENOMIC DNA]</scope>
    <source>
        <strain>NIH 2624 / FGSC A1156</strain>
    </source>
</reference>